<dbReference type="EMBL" id="M62820">
    <property type="protein sequence ID" value="AAA23134.1"/>
    <property type="molecule type" value="Genomic_DNA"/>
</dbReference>
<dbReference type="EMBL" id="AE002160">
    <property type="protein sequence ID" value="AAF39059.1"/>
    <property type="molecule type" value="Genomic_DNA"/>
</dbReference>
<dbReference type="PIR" id="E81732">
    <property type="entry name" value="E81732"/>
</dbReference>
<dbReference type="RefSeq" id="WP_010229752.1">
    <property type="nucleotide sequence ID" value="NZ_CP063055.1"/>
</dbReference>
<dbReference type="SMR" id="P24286"/>
<dbReference type="GeneID" id="93065677"/>
<dbReference type="KEGG" id="cmu:TC_0185"/>
<dbReference type="eggNOG" id="COG0238">
    <property type="taxonomic scope" value="Bacteria"/>
</dbReference>
<dbReference type="HOGENOM" id="CLU_148710_2_2_0"/>
<dbReference type="OrthoDB" id="9812008at2"/>
<dbReference type="Proteomes" id="UP000000800">
    <property type="component" value="Chromosome"/>
</dbReference>
<dbReference type="GO" id="GO:0022627">
    <property type="term" value="C:cytosolic small ribosomal subunit"/>
    <property type="evidence" value="ECO:0007669"/>
    <property type="project" value="TreeGrafter"/>
</dbReference>
<dbReference type="GO" id="GO:0070181">
    <property type="term" value="F:small ribosomal subunit rRNA binding"/>
    <property type="evidence" value="ECO:0007669"/>
    <property type="project" value="TreeGrafter"/>
</dbReference>
<dbReference type="GO" id="GO:0003735">
    <property type="term" value="F:structural constituent of ribosome"/>
    <property type="evidence" value="ECO:0007669"/>
    <property type="project" value="InterPro"/>
</dbReference>
<dbReference type="GO" id="GO:0006412">
    <property type="term" value="P:translation"/>
    <property type="evidence" value="ECO:0007669"/>
    <property type="project" value="UniProtKB-UniRule"/>
</dbReference>
<dbReference type="FunFam" id="4.10.640.10:FF:000004">
    <property type="entry name" value="30S ribosomal protein S18"/>
    <property type="match status" value="1"/>
</dbReference>
<dbReference type="Gene3D" id="4.10.640.10">
    <property type="entry name" value="Ribosomal protein S18"/>
    <property type="match status" value="1"/>
</dbReference>
<dbReference type="HAMAP" id="MF_00270">
    <property type="entry name" value="Ribosomal_bS18"/>
    <property type="match status" value="1"/>
</dbReference>
<dbReference type="InterPro" id="IPR001648">
    <property type="entry name" value="Ribosomal_bS18"/>
</dbReference>
<dbReference type="InterPro" id="IPR018275">
    <property type="entry name" value="Ribosomal_bS18_CS"/>
</dbReference>
<dbReference type="InterPro" id="IPR036870">
    <property type="entry name" value="Ribosomal_bS18_sf"/>
</dbReference>
<dbReference type="NCBIfam" id="TIGR00165">
    <property type="entry name" value="S18"/>
    <property type="match status" value="1"/>
</dbReference>
<dbReference type="PANTHER" id="PTHR13479">
    <property type="entry name" value="30S RIBOSOMAL PROTEIN S18"/>
    <property type="match status" value="1"/>
</dbReference>
<dbReference type="PANTHER" id="PTHR13479:SF40">
    <property type="entry name" value="SMALL RIBOSOMAL SUBUNIT PROTEIN BS18M"/>
    <property type="match status" value="1"/>
</dbReference>
<dbReference type="Pfam" id="PF01084">
    <property type="entry name" value="Ribosomal_S18"/>
    <property type="match status" value="1"/>
</dbReference>
<dbReference type="PRINTS" id="PR00974">
    <property type="entry name" value="RIBOSOMALS18"/>
</dbReference>
<dbReference type="SUPFAM" id="SSF46911">
    <property type="entry name" value="Ribosomal protein S18"/>
    <property type="match status" value="1"/>
</dbReference>
<dbReference type="PROSITE" id="PS00057">
    <property type="entry name" value="RIBOSOMAL_S18"/>
    <property type="match status" value="1"/>
</dbReference>
<reference key="1">
    <citation type="journal article" date="1990" name="J. Bacteriol.">
        <title>Heat shock response of murine Chlamydia trachomatis.</title>
        <authorList>
            <person name="Engel J.N."/>
            <person name="Pollack J."/>
            <person name="Perara E."/>
            <person name="Ganem D."/>
        </authorList>
    </citation>
    <scope>NUCLEOTIDE SEQUENCE [GENOMIC DNA]</scope>
    <source>
        <strain>MoPn</strain>
    </source>
</reference>
<reference key="2">
    <citation type="journal article" date="2000" name="Nucleic Acids Res.">
        <title>Genome sequences of Chlamydia trachomatis MoPn and Chlamydia pneumoniae AR39.</title>
        <authorList>
            <person name="Read T.D."/>
            <person name="Brunham R.C."/>
            <person name="Shen C."/>
            <person name="Gill S.R."/>
            <person name="Heidelberg J.F."/>
            <person name="White O."/>
            <person name="Hickey E.K."/>
            <person name="Peterson J.D."/>
            <person name="Utterback T.R."/>
            <person name="Berry K.J."/>
            <person name="Bass S."/>
            <person name="Linher K.D."/>
            <person name="Weidman J.F."/>
            <person name="Khouri H.M."/>
            <person name="Craven B."/>
            <person name="Bowman C."/>
            <person name="Dodson R.J."/>
            <person name="Gwinn M.L."/>
            <person name="Nelson W.C."/>
            <person name="DeBoy R.T."/>
            <person name="Kolonay J.F."/>
            <person name="McClarty G."/>
            <person name="Salzberg S.L."/>
            <person name="Eisen J.A."/>
            <person name="Fraser C.M."/>
        </authorList>
    </citation>
    <scope>NUCLEOTIDE SEQUENCE [LARGE SCALE GENOMIC DNA]</scope>
    <source>
        <strain>MoPn / Nigg</strain>
    </source>
</reference>
<keyword id="KW-0687">Ribonucleoprotein</keyword>
<keyword id="KW-0689">Ribosomal protein</keyword>
<keyword id="KW-0694">RNA-binding</keyword>
<keyword id="KW-0699">rRNA-binding</keyword>
<comment type="function">
    <text evidence="1">Binds as a heterodimer with protein bS6 to the central domain of the 16S rRNA, where it helps stabilize the platform of the 30S subunit.</text>
</comment>
<comment type="subunit">
    <text evidence="1">Part of the 30S ribosomal subunit. Forms a tight heterodimer with protein bS6.</text>
</comment>
<comment type="similarity">
    <text evidence="1">Belongs to the bacterial ribosomal protein bS18 family.</text>
</comment>
<name>RS18_CHLMU</name>
<proteinExistence type="inferred from homology"/>
<feature type="chain" id="PRO_0000111139" description="Small ribosomal subunit protein bS18">
    <location>
        <begin position="1"/>
        <end position="81"/>
    </location>
</feature>
<feature type="sequence conflict" description="In Ref. 1; AAA23134." evidence="2" ref="1">
    <original>PFVGED</original>
    <variation>LS</variation>
    <location>
        <begin position="76"/>
        <end position="81"/>
    </location>
</feature>
<evidence type="ECO:0000255" key="1">
    <source>
        <dbReference type="HAMAP-Rule" id="MF_00270"/>
    </source>
</evidence>
<evidence type="ECO:0000305" key="2"/>
<sequence>MNRPVHNEHRRKRFAKKCPFVSAGWKTIDYKDVVTLKRFITERGKILPRRITGVSSRFQALLAQAVKRARHVGLLPFVGED</sequence>
<protein>
    <recommendedName>
        <fullName evidence="1">Small ribosomal subunit protein bS18</fullName>
    </recommendedName>
    <alternativeName>
        <fullName evidence="2">30S ribosomal protein S18</fullName>
    </alternativeName>
</protein>
<gene>
    <name evidence="1" type="primary">rpsR</name>
    <name type="ordered locus">TC_0185</name>
</gene>
<organism>
    <name type="scientific">Chlamydia muridarum (strain MoPn / Nigg)</name>
    <dbReference type="NCBI Taxonomy" id="243161"/>
    <lineage>
        <taxon>Bacteria</taxon>
        <taxon>Pseudomonadati</taxon>
        <taxon>Chlamydiota</taxon>
        <taxon>Chlamydiia</taxon>
        <taxon>Chlamydiales</taxon>
        <taxon>Chlamydiaceae</taxon>
        <taxon>Chlamydia/Chlamydophila group</taxon>
        <taxon>Chlamydia</taxon>
    </lineage>
</organism>
<accession>P24286</accession>